<proteinExistence type="predicted"/>
<organism>
    <name type="scientific">Schizosaccharomyces pombe (strain 972 / ATCC 24843)</name>
    <name type="common">Fission yeast</name>
    <dbReference type="NCBI Taxonomy" id="284812"/>
    <lineage>
        <taxon>Eukaryota</taxon>
        <taxon>Fungi</taxon>
        <taxon>Dikarya</taxon>
        <taxon>Ascomycota</taxon>
        <taxon>Taphrinomycotina</taxon>
        <taxon>Schizosaccharomycetes</taxon>
        <taxon>Schizosaccharomycetales</taxon>
        <taxon>Schizosaccharomycetaceae</taxon>
        <taxon>Schizosaccharomyces</taxon>
    </lineage>
</organism>
<feature type="chain" id="PRO_0000071132" description="J domain-containing protein spf31">
    <location>
        <begin position="1"/>
        <end position="209"/>
    </location>
</feature>
<feature type="domain" description="J" evidence="1">
    <location>
        <begin position="31"/>
        <end position="96"/>
    </location>
</feature>
<feature type="region of interest" description="Disordered" evidence="2">
    <location>
        <begin position="149"/>
        <end position="175"/>
    </location>
</feature>
<feature type="region of interest" description="Disordered" evidence="2">
    <location>
        <begin position="187"/>
        <end position="209"/>
    </location>
</feature>
<feature type="compositionally biased region" description="Basic and acidic residues" evidence="2">
    <location>
        <begin position="154"/>
        <end position="175"/>
    </location>
</feature>
<feature type="compositionally biased region" description="Basic residues" evidence="2">
    <location>
        <begin position="192"/>
        <end position="209"/>
    </location>
</feature>
<protein>
    <recommendedName>
        <fullName>J domain-containing protein spf31</fullName>
    </recommendedName>
</protein>
<keyword id="KW-0143">Chaperone</keyword>
<keyword id="KW-1185">Reference proteome</keyword>
<sequence length="209" mass="24609">MADVAKFLDRVEGSLNRGREIDRILSSFKLNAYDVLDILPGMSVDDIRNLYRKKSLMIHPDKNRDNPKAADAFDILKKAESDLVNDKIRESLDSAYTAARNQLLKEKKLSPNSEDVHSDQFLFDLKVRWREILIADEVARRRARQLDLANQQREQARQDEIARERKRRVESEKVWEETRDNRVGNWQDFLHKTKKNNLKKKNKKPRVLG</sequence>
<accession>O74746</accession>
<evidence type="ECO:0000255" key="1">
    <source>
        <dbReference type="PROSITE-ProRule" id="PRU00286"/>
    </source>
</evidence>
<evidence type="ECO:0000256" key="2">
    <source>
        <dbReference type="SAM" id="MobiDB-lite"/>
    </source>
</evidence>
<reference key="1">
    <citation type="journal article" date="2002" name="Nature">
        <title>The genome sequence of Schizosaccharomyces pombe.</title>
        <authorList>
            <person name="Wood V."/>
            <person name="Gwilliam R."/>
            <person name="Rajandream M.A."/>
            <person name="Lyne M.H."/>
            <person name="Lyne R."/>
            <person name="Stewart A."/>
            <person name="Sgouros J.G."/>
            <person name="Peat N."/>
            <person name="Hayles J."/>
            <person name="Baker S.G."/>
            <person name="Basham D."/>
            <person name="Bowman S."/>
            <person name="Brooks K."/>
            <person name="Brown D."/>
            <person name="Brown S."/>
            <person name="Chillingworth T."/>
            <person name="Churcher C.M."/>
            <person name="Collins M."/>
            <person name="Connor R."/>
            <person name="Cronin A."/>
            <person name="Davis P."/>
            <person name="Feltwell T."/>
            <person name="Fraser A."/>
            <person name="Gentles S."/>
            <person name="Goble A."/>
            <person name="Hamlin N."/>
            <person name="Harris D.E."/>
            <person name="Hidalgo J."/>
            <person name="Hodgson G."/>
            <person name="Holroyd S."/>
            <person name="Hornsby T."/>
            <person name="Howarth S."/>
            <person name="Huckle E.J."/>
            <person name="Hunt S."/>
            <person name="Jagels K."/>
            <person name="James K.D."/>
            <person name="Jones L."/>
            <person name="Jones M."/>
            <person name="Leather S."/>
            <person name="McDonald S."/>
            <person name="McLean J."/>
            <person name="Mooney P."/>
            <person name="Moule S."/>
            <person name="Mungall K.L."/>
            <person name="Murphy L.D."/>
            <person name="Niblett D."/>
            <person name="Odell C."/>
            <person name="Oliver K."/>
            <person name="O'Neil S."/>
            <person name="Pearson D."/>
            <person name="Quail M.A."/>
            <person name="Rabbinowitsch E."/>
            <person name="Rutherford K.M."/>
            <person name="Rutter S."/>
            <person name="Saunders D."/>
            <person name="Seeger K."/>
            <person name="Sharp S."/>
            <person name="Skelton J."/>
            <person name="Simmonds M.N."/>
            <person name="Squares R."/>
            <person name="Squares S."/>
            <person name="Stevens K."/>
            <person name="Taylor K."/>
            <person name="Taylor R.G."/>
            <person name="Tivey A."/>
            <person name="Walsh S.V."/>
            <person name="Warren T."/>
            <person name="Whitehead S."/>
            <person name="Woodward J.R."/>
            <person name="Volckaert G."/>
            <person name="Aert R."/>
            <person name="Robben J."/>
            <person name="Grymonprez B."/>
            <person name="Weltjens I."/>
            <person name="Vanstreels E."/>
            <person name="Rieger M."/>
            <person name="Schaefer M."/>
            <person name="Mueller-Auer S."/>
            <person name="Gabel C."/>
            <person name="Fuchs M."/>
            <person name="Duesterhoeft A."/>
            <person name="Fritzc C."/>
            <person name="Holzer E."/>
            <person name="Moestl D."/>
            <person name="Hilbert H."/>
            <person name="Borzym K."/>
            <person name="Langer I."/>
            <person name="Beck A."/>
            <person name="Lehrach H."/>
            <person name="Reinhardt R."/>
            <person name="Pohl T.M."/>
            <person name="Eger P."/>
            <person name="Zimmermann W."/>
            <person name="Wedler H."/>
            <person name="Wambutt R."/>
            <person name="Purnelle B."/>
            <person name="Goffeau A."/>
            <person name="Cadieu E."/>
            <person name="Dreano S."/>
            <person name="Gloux S."/>
            <person name="Lelaure V."/>
            <person name="Mottier S."/>
            <person name="Galibert F."/>
            <person name="Aves S.J."/>
            <person name="Xiang Z."/>
            <person name="Hunt C."/>
            <person name="Moore K."/>
            <person name="Hurst S.M."/>
            <person name="Lucas M."/>
            <person name="Rochet M."/>
            <person name="Gaillardin C."/>
            <person name="Tallada V.A."/>
            <person name="Garzon A."/>
            <person name="Thode G."/>
            <person name="Daga R.R."/>
            <person name="Cruzado L."/>
            <person name="Jimenez J."/>
            <person name="Sanchez M."/>
            <person name="del Rey F."/>
            <person name="Benito J."/>
            <person name="Dominguez A."/>
            <person name="Revuelta J.L."/>
            <person name="Moreno S."/>
            <person name="Armstrong J."/>
            <person name="Forsburg S.L."/>
            <person name="Cerutti L."/>
            <person name="Lowe T."/>
            <person name="McCombie W.R."/>
            <person name="Paulsen I."/>
            <person name="Potashkin J."/>
            <person name="Shpakovski G.V."/>
            <person name="Ussery D."/>
            <person name="Barrell B.G."/>
            <person name="Nurse P."/>
        </authorList>
    </citation>
    <scope>NUCLEOTIDE SEQUENCE [LARGE SCALE GENOMIC DNA]</scope>
    <source>
        <strain>972 / ATCC 24843</strain>
    </source>
</reference>
<dbReference type="EMBL" id="CU329671">
    <property type="protein sequence ID" value="CAA21299.1"/>
    <property type="molecule type" value="Genomic_DNA"/>
</dbReference>
<dbReference type="PIR" id="T39652">
    <property type="entry name" value="T39652"/>
</dbReference>
<dbReference type="RefSeq" id="NP_595422.1">
    <property type="nucleotide sequence ID" value="NM_001021330.2"/>
</dbReference>
<dbReference type="SMR" id="O74746"/>
<dbReference type="BioGRID" id="276323">
    <property type="interactions" value="24"/>
</dbReference>
<dbReference type="FunCoup" id="O74746">
    <property type="interactions" value="683"/>
</dbReference>
<dbReference type="STRING" id="284812.O74746"/>
<dbReference type="iPTMnet" id="O74746"/>
<dbReference type="PaxDb" id="4896-SPBC1734.05c.1"/>
<dbReference type="EnsemblFungi" id="SPBC1734.05c.1">
    <property type="protein sequence ID" value="SPBC1734.05c.1:pep"/>
    <property type="gene ID" value="SPBC1734.05c"/>
</dbReference>
<dbReference type="GeneID" id="2539772"/>
<dbReference type="KEGG" id="spo:2539772"/>
<dbReference type="PomBase" id="SPBC1734.05c">
    <property type="gene designation" value="spf31"/>
</dbReference>
<dbReference type="VEuPathDB" id="FungiDB:SPBC1734.05c"/>
<dbReference type="eggNOG" id="KOG1150">
    <property type="taxonomic scope" value="Eukaryota"/>
</dbReference>
<dbReference type="HOGENOM" id="CLU_070940_1_0_1"/>
<dbReference type="InParanoid" id="O74746"/>
<dbReference type="OMA" id="NWEDERD"/>
<dbReference type="PhylomeDB" id="O74746"/>
<dbReference type="PRO" id="PR:O74746"/>
<dbReference type="Proteomes" id="UP000002485">
    <property type="component" value="Chromosome II"/>
</dbReference>
<dbReference type="GO" id="GO:0005634">
    <property type="term" value="C:nucleus"/>
    <property type="evidence" value="ECO:0007005"/>
    <property type="project" value="PomBase"/>
</dbReference>
<dbReference type="GO" id="GO:0030544">
    <property type="term" value="F:Hsp70 protein binding"/>
    <property type="evidence" value="ECO:0000255"/>
    <property type="project" value="PomBase"/>
</dbReference>
<dbReference type="GO" id="GO:0045292">
    <property type="term" value="P:mRNA cis splicing, via spliceosome"/>
    <property type="evidence" value="ECO:0000303"/>
    <property type="project" value="PomBase"/>
</dbReference>
<dbReference type="CDD" id="cd06257">
    <property type="entry name" value="DnaJ"/>
    <property type="match status" value="1"/>
</dbReference>
<dbReference type="Gene3D" id="1.10.287.110">
    <property type="entry name" value="DnaJ domain"/>
    <property type="match status" value="1"/>
</dbReference>
<dbReference type="InterPro" id="IPR001623">
    <property type="entry name" value="DnaJ_domain"/>
</dbReference>
<dbReference type="InterPro" id="IPR036869">
    <property type="entry name" value="J_dom_sf"/>
</dbReference>
<dbReference type="PANTHER" id="PTHR46620">
    <property type="entry name" value="J DOMAIN-CONTAINING PROTEIN SPF31"/>
    <property type="match status" value="1"/>
</dbReference>
<dbReference type="PANTHER" id="PTHR46620:SF1">
    <property type="entry name" value="J DOMAIN-CONTAINING PROTEIN SPF31"/>
    <property type="match status" value="1"/>
</dbReference>
<dbReference type="Pfam" id="PF00226">
    <property type="entry name" value="DnaJ"/>
    <property type="match status" value="1"/>
</dbReference>
<dbReference type="SMART" id="SM00271">
    <property type="entry name" value="DnaJ"/>
    <property type="match status" value="1"/>
</dbReference>
<dbReference type="SUPFAM" id="SSF46565">
    <property type="entry name" value="Chaperone J-domain"/>
    <property type="match status" value="1"/>
</dbReference>
<dbReference type="PROSITE" id="PS50076">
    <property type="entry name" value="DNAJ_2"/>
    <property type="match status" value="1"/>
</dbReference>
<name>SPF31_SCHPO</name>
<gene>
    <name type="primary">spf31</name>
    <name type="ORF">SPBC1734.05c</name>
</gene>